<feature type="chain" id="PRO_0000249059" description="2-acylglycerol O-acyltransferase 1">
    <location>
        <begin position="1"/>
        <end position="335"/>
    </location>
</feature>
<feature type="transmembrane region" description="Helical" evidence="1">
    <location>
        <begin position="24"/>
        <end position="44"/>
    </location>
</feature>
<feature type="transmembrane region" description="Helical" evidence="1">
    <location>
        <begin position="104"/>
        <end position="124"/>
    </location>
</feature>
<feature type="glycosylation site" description="N-linked (GlcNAc...) asparagine" evidence="1">
    <location>
        <position position="180"/>
    </location>
</feature>
<feature type="sequence conflict" description="In Ref. 2; BAB22288." evidence="5" ref="2">
    <original>KE</original>
    <variation>FL</variation>
    <location>
        <begin position="85"/>
        <end position="86"/>
    </location>
</feature>
<feature type="sequence conflict" description="In Ref. 1; AAK84177 and 4; AAI06136." evidence="5" ref="1 4">
    <original>T</original>
    <variation>I</variation>
    <location>
        <position position="294"/>
    </location>
</feature>
<protein>
    <recommendedName>
        <fullName evidence="5">2-acylglycerol O-acyltransferase 1</fullName>
        <ecNumber evidence="2 3 4">2.3.1.22</ecNumber>
    </recommendedName>
    <alternativeName>
        <fullName>Acyl-CoA:monoacylglycerol acyltransferase 1</fullName>
        <shortName>MGAT1</shortName>
    </alternativeName>
    <alternativeName>
        <fullName>Diacylglycerol acyltransferase 2-like protein 1</fullName>
    </alternativeName>
    <alternativeName>
        <fullName>Monoacylglycerol O-acyltransferase 1</fullName>
    </alternativeName>
</protein>
<proteinExistence type="evidence at protein level"/>
<evidence type="ECO:0000255" key="1"/>
<evidence type="ECO:0000269" key="2">
    <source>
    </source>
</evidence>
<evidence type="ECO:0000269" key="3">
    <source>
    </source>
</evidence>
<evidence type="ECO:0000269" key="4">
    <source>
    </source>
</evidence>
<evidence type="ECO:0000305" key="5"/>
<evidence type="ECO:0000305" key="6">
    <source>
    </source>
</evidence>
<evidence type="ECO:0000305" key="7">
    <source>
    </source>
</evidence>
<evidence type="ECO:0000305" key="8">
    <source>
    </source>
</evidence>
<evidence type="ECO:0000312" key="9">
    <source>
        <dbReference type="MGI" id="MGI:1915643"/>
    </source>
</evidence>
<keyword id="KW-0012">Acyltransferase</keyword>
<keyword id="KW-0256">Endoplasmic reticulum</keyword>
<keyword id="KW-0319">Glycerol metabolism</keyword>
<keyword id="KW-0325">Glycoprotein</keyword>
<keyword id="KW-0444">Lipid biosynthesis</keyword>
<keyword id="KW-0443">Lipid metabolism</keyword>
<keyword id="KW-0472">Membrane</keyword>
<keyword id="KW-1185">Reference proteome</keyword>
<keyword id="KW-0808">Transferase</keyword>
<keyword id="KW-0812">Transmembrane</keyword>
<keyword id="KW-1133">Transmembrane helix</keyword>
<dbReference type="EC" id="2.3.1.22" evidence="2 3 4"/>
<dbReference type="EMBL" id="AF384162">
    <property type="protein sequence ID" value="AAK84177.1"/>
    <property type="molecule type" value="mRNA"/>
</dbReference>
<dbReference type="EMBL" id="AK002693">
    <property type="protein sequence ID" value="BAB22288.1"/>
    <property type="molecule type" value="mRNA"/>
</dbReference>
<dbReference type="EMBL" id="AC158559">
    <property type="status" value="NOT_ANNOTATED_CDS"/>
    <property type="molecule type" value="Genomic_DNA"/>
</dbReference>
<dbReference type="EMBL" id="BC106135">
    <property type="protein sequence ID" value="AAI06136.1"/>
    <property type="molecule type" value="mRNA"/>
</dbReference>
<dbReference type="CCDS" id="CCDS15085.1"/>
<dbReference type="RefSeq" id="NP_080989.2">
    <property type="nucleotide sequence ID" value="NM_026713.3"/>
</dbReference>
<dbReference type="RefSeq" id="XP_017177770.1">
    <property type="nucleotide sequence ID" value="XM_017322281.3"/>
</dbReference>
<dbReference type="RefSeq" id="XP_036009175.1">
    <property type="nucleotide sequence ID" value="XM_036153282.1"/>
</dbReference>
<dbReference type="FunCoup" id="Q91ZV4">
    <property type="interactions" value="357"/>
</dbReference>
<dbReference type="STRING" id="10090.ENSMUSP00000109152"/>
<dbReference type="SwissLipids" id="SLP:000000300"/>
<dbReference type="GlyCosmos" id="Q91ZV4">
    <property type="glycosylation" value="1 site, No reported glycans"/>
</dbReference>
<dbReference type="GlyGen" id="Q91ZV4">
    <property type="glycosylation" value="1 site"/>
</dbReference>
<dbReference type="iPTMnet" id="Q91ZV4"/>
<dbReference type="PhosphoSitePlus" id="Q91ZV4"/>
<dbReference type="jPOST" id="Q91ZV4"/>
<dbReference type="PaxDb" id="10090-ENSMUSP00000109152"/>
<dbReference type="ProteomicsDB" id="295579"/>
<dbReference type="Antibodypedia" id="34362">
    <property type="antibodies" value="102 antibodies from 20 providers"/>
</dbReference>
<dbReference type="DNASU" id="68393"/>
<dbReference type="Ensembl" id="ENSMUST00000012331.7">
    <property type="protein sequence ID" value="ENSMUSP00000012331.7"/>
    <property type="gene ID" value="ENSMUSG00000012187.14"/>
</dbReference>
<dbReference type="Ensembl" id="ENSMUST00000113524.8">
    <property type="protein sequence ID" value="ENSMUSP00000109152.2"/>
    <property type="gene ID" value="ENSMUSG00000012187.14"/>
</dbReference>
<dbReference type="GeneID" id="68393"/>
<dbReference type="KEGG" id="mmu:68393"/>
<dbReference type="UCSC" id="uc007bqk.1">
    <property type="organism name" value="mouse"/>
</dbReference>
<dbReference type="AGR" id="MGI:1915643"/>
<dbReference type="CTD" id="116255"/>
<dbReference type="MGI" id="MGI:1915643">
    <property type="gene designation" value="Mogat1"/>
</dbReference>
<dbReference type="VEuPathDB" id="HostDB:ENSMUSG00000012187"/>
<dbReference type="eggNOG" id="KOG0831">
    <property type="taxonomic scope" value="Eukaryota"/>
</dbReference>
<dbReference type="GeneTree" id="ENSGT01030000234582"/>
<dbReference type="HOGENOM" id="CLU_023995_0_1_1"/>
<dbReference type="InParanoid" id="Q91ZV4"/>
<dbReference type="OMA" id="WIKNWTL"/>
<dbReference type="OrthoDB" id="264532at2759"/>
<dbReference type="PhylomeDB" id="Q91ZV4"/>
<dbReference type="TreeFam" id="TF314707"/>
<dbReference type="BRENDA" id="2.3.1.22">
    <property type="organism ID" value="3474"/>
</dbReference>
<dbReference type="Reactome" id="R-MMU-75109">
    <property type="pathway name" value="Triglyceride biosynthesis"/>
</dbReference>
<dbReference type="UniPathway" id="UPA00282"/>
<dbReference type="BioGRID-ORCS" id="68393">
    <property type="hits" value="0 hits in 80 CRISPR screens"/>
</dbReference>
<dbReference type="ChiTaRS" id="Mogat1">
    <property type="organism name" value="mouse"/>
</dbReference>
<dbReference type="PRO" id="PR:Q91ZV4"/>
<dbReference type="Proteomes" id="UP000000589">
    <property type="component" value="Chromosome 1"/>
</dbReference>
<dbReference type="RNAct" id="Q91ZV4">
    <property type="molecule type" value="protein"/>
</dbReference>
<dbReference type="Bgee" id="ENSMUSG00000012187">
    <property type="expression patterns" value="Expressed in epithelium of stomach and 83 other cell types or tissues"/>
</dbReference>
<dbReference type="ExpressionAtlas" id="Q91ZV4">
    <property type="expression patterns" value="baseline and differential"/>
</dbReference>
<dbReference type="GO" id="GO:0005783">
    <property type="term" value="C:endoplasmic reticulum"/>
    <property type="evidence" value="ECO:0000314"/>
    <property type="project" value="MGI"/>
</dbReference>
<dbReference type="GO" id="GO:0005789">
    <property type="term" value="C:endoplasmic reticulum membrane"/>
    <property type="evidence" value="ECO:0007669"/>
    <property type="project" value="UniProtKB-SubCell"/>
</dbReference>
<dbReference type="GO" id="GO:0016020">
    <property type="term" value="C:membrane"/>
    <property type="evidence" value="ECO:0000314"/>
    <property type="project" value="MGI"/>
</dbReference>
<dbReference type="GO" id="GO:0003846">
    <property type="term" value="F:2-acylglycerol O-acyltransferase activity"/>
    <property type="evidence" value="ECO:0000314"/>
    <property type="project" value="MGI"/>
</dbReference>
<dbReference type="GO" id="GO:0004144">
    <property type="term" value="F:diacylglycerol O-acyltransferase activity"/>
    <property type="evidence" value="ECO:0000314"/>
    <property type="project" value="MGI"/>
</dbReference>
<dbReference type="GO" id="GO:0006651">
    <property type="term" value="P:diacylglycerol biosynthetic process"/>
    <property type="evidence" value="ECO:0000314"/>
    <property type="project" value="MGI"/>
</dbReference>
<dbReference type="GO" id="GO:0006071">
    <property type="term" value="P:glycerol metabolic process"/>
    <property type="evidence" value="ECO:0007669"/>
    <property type="project" value="UniProtKB-KW"/>
</dbReference>
<dbReference type="GO" id="GO:0019432">
    <property type="term" value="P:triglyceride biosynthetic process"/>
    <property type="evidence" value="ECO:0007669"/>
    <property type="project" value="UniProtKB-UniPathway"/>
</dbReference>
<dbReference type="CDD" id="cd07987">
    <property type="entry name" value="LPLAT_MGAT-like"/>
    <property type="match status" value="1"/>
</dbReference>
<dbReference type="InterPro" id="IPR007130">
    <property type="entry name" value="DAGAT"/>
</dbReference>
<dbReference type="PANTHER" id="PTHR12317:SF26">
    <property type="entry name" value="2-ACYLGLYCEROL O-ACYLTRANSFERASE 1"/>
    <property type="match status" value="1"/>
</dbReference>
<dbReference type="PANTHER" id="PTHR12317">
    <property type="entry name" value="DIACYLGLYCEROL O-ACYLTRANSFERASE"/>
    <property type="match status" value="1"/>
</dbReference>
<dbReference type="Pfam" id="PF03982">
    <property type="entry name" value="DAGAT"/>
    <property type="match status" value="1"/>
</dbReference>
<organism>
    <name type="scientific">Mus musculus</name>
    <name type="common">Mouse</name>
    <dbReference type="NCBI Taxonomy" id="10090"/>
    <lineage>
        <taxon>Eukaryota</taxon>
        <taxon>Metazoa</taxon>
        <taxon>Chordata</taxon>
        <taxon>Craniata</taxon>
        <taxon>Vertebrata</taxon>
        <taxon>Euteleostomi</taxon>
        <taxon>Mammalia</taxon>
        <taxon>Eutheria</taxon>
        <taxon>Euarchontoglires</taxon>
        <taxon>Glires</taxon>
        <taxon>Rodentia</taxon>
        <taxon>Myomorpha</taxon>
        <taxon>Muroidea</taxon>
        <taxon>Muridae</taxon>
        <taxon>Murinae</taxon>
        <taxon>Mus</taxon>
        <taxon>Mus</taxon>
    </lineage>
</organism>
<sequence length="335" mass="38791">MMVEFAPLNTPLARCLQTAAVLQWVLSFLLLVQVCIGIMVMLVLYNYWFLYIPYLVWFYYDWRTPEQGGRRWNWVQSWPVWKYFKEYFPICLVKTQDLDPGHNYIFGFHPHGIFVPGAFGNFCTKYSDFKKLFPGFTSYLHVAKIWFCFPLFREYLMSNGPVSVSKESLSHVLSKDGGGNVSIIVLGGAKEALEAHPGTFTLCIRQRKGFVKMALTHGASLVPVFSFGENDLYKQINNPKGSWLRTIQDAMYDSMGVALPLIYARGIFQHYFGIMPYRKLIYTVVGRPIPVQQTLNPTSEQIEELHQTYLEELKKLFNEHKGKYGIPEHETLVFK</sequence>
<name>MOGT1_MOUSE</name>
<gene>
    <name evidence="9" type="primary">Mogat1</name>
    <name type="synonym">Dgat2l1</name>
</gene>
<accession>Q91ZV4</accession>
<accession>E9QLA2</accession>
<accession>Q9DCL0</accession>
<reference key="1">
    <citation type="journal article" date="2001" name="J. Biol. Chem.">
        <title>Cloning of DGAT2, a second mammalian diacylglycerol acyltransferase, and related family members.</title>
        <authorList>
            <person name="Cases S."/>
            <person name="Stone S.J."/>
            <person name="Zhou P."/>
            <person name="Yen C.-L.E."/>
            <person name="Tow B."/>
            <person name="Lardizabal K.D."/>
            <person name="Voelker T."/>
            <person name="Farese R.V. Jr."/>
        </authorList>
    </citation>
    <scope>NUCLEOTIDE SEQUENCE [MRNA]</scope>
    <source>
        <tissue>Liver</tissue>
    </source>
</reference>
<reference key="2">
    <citation type="journal article" date="2005" name="Science">
        <title>The transcriptional landscape of the mammalian genome.</title>
        <authorList>
            <person name="Carninci P."/>
            <person name="Kasukawa T."/>
            <person name="Katayama S."/>
            <person name="Gough J."/>
            <person name="Frith M.C."/>
            <person name="Maeda N."/>
            <person name="Oyama R."/>
            <person name="Ravasi T."/>
            <person name="Lenhard B."/>
            <person name="Wells C."/>
            <person name="Kodzius R."/>
            <person name="Shimokawa K."/>
            <person name="Bajic V.B."/>
            <person name="Brenner S.E."/>
            <person name="Batalov S."/>
            <person name="Forrest A.R."/>
            <person name="Zavolan M."/>
            <person name="Davis M.J."/>
            <person name="Wilming L.G."/>
            <person name="Aidinis V."/>
            <person name="Allen J.E."/>
            <person name="Ambesi-Impiombato A."/>
            <person name="Apweiler R."/>
            <person name="Aturaliya R.N."/>
            <person name="Bailey T.L."/>
            <person name="Bansal M."/>
            <person name="Baxter L."/>
            <person name="Beisel K.W."/>
            <person name="Bersano T."/>
            <person name="Bono H."/>
            <person name="Chalk A.M."/>
            <person name="Chiu K.P."/>
            <person name="Choudhary V."/>
            <person name="Christoffels A."/>
            <person name="Clutterbuck D.R."/>
            <person name="Crowe M.L."/>
            <person name="Dalla E."/>
            <person name="Dalrymple B.P."/>
            <person name="de Bono B."/>
            <person name="Della Gatta G."/>
            <person name="di Bernardo D."/>
            <person name="Down T."/>
            <person name="Engstrom P."/>
            <person name="Fagiolini M."/>
            <person name="Faulkner G."/>
            <person name="Fletcher C.F."/>
            <person name="Fukushima T."/>
            <person name="Furuno M."/>
            <person name="Futaki S."/>
            <person name="Gariboldi M."/>
            <person name="Georgii-Hemming P."/>
            <person name="Gingeras T.R."/>
            <person name="Gojobori T."/>
            <person name="Green R.E."/>
            <person name="Gustincich S."/>
            <person name="Harbers M."/>
            <person name="Hayashi Y."/>
            <person name="Hensch T.K."/>
            <person name="Hirokawa N."/>
            <person name="Hill D."/>
            <person name="Huminiecki L."/>
            <person name="Iacono M."/>
            <person name="Ikeo K."/>
            <person name="Iwama A."/>
            <person name="Ishikawa T."/>
            <person name="Jakt M."/>
            <person name="Kanapin A."/>
            <person name="Katoh M."/>
            <person name="Kawasawa Y."/>
            <person name="Kelso J."/>
            <person name="Kitamura H."/>
            <person name="Kitano H."/>
            <person name="Kollias G."/>
            <person name="Krishnan S.P."/>
            <person name="Kruger A."/>
            <person name="Kummerfeld S.K."/>
            <person name="Kurochkin I.V."/>
            <person name="Lareau L.F."/>
            <person name="Lazarevic D."/>
            <person name="Lipovich L."/>
            <person name="Liu J."/>
            <person name="Liuni S."/>
            <person name="McWilliam S."/>
            <person name="Madan Babu M."/>
            <person name="Madera M."/>
            <person name="Marchionni L."/>
            <person name="Matsuda H."/>
            <person name="Matsuzawa S."/>
            <person name="Miki H."/>
            <person name="Mignone F."/>
            <person name="Miyake S."/>
            <person name="Morris K."/>
            <person name="Mottagui-Tabar S."/>
            <person name="Mulder N."/>
            <person name="Nakano N."/>
            <person name="Nakauchi H."/>
            <person name="Ng P."/>
            <person name="Nilsson R."/>
            <person name="Nishiguchi S."/>
            <person name="Nishikawa S."/>
            <person name="Nori F."/>
            <person name="Ohara O."/>
            <person name="Okazaki Y."/>
            <person name="Orlando V."/>
            <person name="Pang K.C."/>
            <person name="Pavan W.J."/>
            <person name="Pavesi G."/>
            <person name="Pesole G."/>
            <person name="Petrovsky N."/>
            <person name="Piazza S."/>
            <person name="Reed J."/>
            <person name="Reid J.F."/>
            <person name="Ring B.Z."/>
            <person name="Ringwald M."/>
            <person name="Rost B."/>
            <person name="Ruan Y."/>
            <person name="Salzberg S.L."/>
            <person name="Sandelin A."/>
            <person name="Schneider C."/>
            <person name="Schoenbach C."/>
            <person name="Sekiguchi K."/>
            <person name="Semple C.A."/>
            <person name="Seno S."/>
            <person name="Sessa L."/>
            <person name="Sheng Y."/>
            <person name="Shibata Y."/>
            <person name="Shimada H."/>
            <person name="Shimada K."/>
            <person name="Silva D."/>
            <person name="Sinclair B."/>
            <person name="Sperling S."/>
            <person name="Stupka E."/>
            <person name="Sugiura K."/>
            <person name="Sultana R."/>
            <person name="Takenaka Y."/>
            <person name="Taki K."/>
            <person name="Tammoja K."/>
            <person name="Tan S.L."/>
            <person name="Tang S."/>
            <person name="Taylor M.S."/>
            <person name="Tegner J."/>
            <person name="Teichmann S.A."/>
            <person name="Ueda H.R."/>
            <person name="van Nimwegen E."/>
            <person name="Verardo R."/>
            <person name="Wei C.L."/>
            <person name="Yagi K."/>
            <person name="Yamanishi H."/>
            <person name="Zabarovsky E."/>
            <person name="Zhu S."/>
            <person name="Zimmer A."/>
            <person name="Hide W."/>
            <person name="Bult C."/>
            <person name="Grimmond S.M."/>
            <person name="Teasdale R.D."/>
            <person name="Liu E.T."/>
            <person name="Brusic V."/>
            <person name="Quackenbush J."/>
            <person name="Wahlestedt C."/>
            <person name="Mattick J.S."/>
            <person name="Hume D.A."/>
            <person name="Kai C."/>
            <person name="Sasaki D."/>
            <person name="Tomaru Y."/>
            <person name="Fukuda S."/>
            <person name="Kanamori-Katayama M."/>
            <person name="Suzuki M."/>
            <person name="Aoki J."/>
            <person name="Arakawa T."/>
            <person name="Iida J."/>
            <person name="Imamura K."/>
            <person name="Itoh M."/>
            <person name="Kato T."/>
            <person name="Kawaji H."/>
            <person name="Kawagashira N."/>
            <person name="Kawashima T."/>
            <person name="Kojima M."/>
            <person name="Kondo S."/>
            <person name="Konno H."/>
            <person name="Nakano K."/>
            <person name="Ninomiya N."/>
            <person name="Nishio T."/>
            <person name="Okada M."/>
            <person name="Plessy C."/>
            <person name="Shibata K."/>
            <person name="Shiraki T."/>
            <person name="Suzuki S."/>
            <person name="Tagami M."/>
            <person name="Waki K."/>
            <person name="Watahiki A."/>
            <person name="Okamura-Oho Y."/>
            <person name="Suzuki H."/>
            <person name="Kawai J."/>
            <person name="Hayashizaki Y."/>
        </authorList>
    </citation>
    <scope>NUCLEOTIDE SEQUENCE [LARGE SCALE MRNA]</scope>
    <source>
        <strain>C57BL/6J</strain>
        <tissue>Kidney</tissue>
    </source>
</reference>
<reference key="3">
    <citation type="journal article" date="2009" name="PLoS Biol.">
        <title>Lineage-specific biology revealed by a finished genome assembly of the mouse.</title>
        <authorList>
            <person name="Church D.M."/>
            <person name="Goodstadt L."/>
            <person name="Hillier L.W."/>
            <person name="Zody M.C."/>
            <person name="Goldstein S."/>
            <person name="She X."/>
            <person name="Bult C.J."/>
            <person name="Agarwala R."/>
            <person name="Cherry J.L."/>
            <person name="DiCuccio M."/>
            <person name="Hlavina W."/>
            <person name="Kapustin Y."/>
            <person name="Meric P."/>
            <person name="Maglott D."/>
            <person name="Birtle Z."/>
            <person name="Marques A.C."/>
            <person name="Graves T."/>
            <person name="Zhou S."/>
            <person name="Teague B."/>
            <person name="Potamousis K."/>
            <person name="Churas C."/>
            <person name="Place M."/>
            <person name="Herschleb J."/>
            <person name="Runnheim R."/>
            <person name="Forrest D."/>
            <person name="Amos-Landgraf J."/>
            <person name="Schwartz D.C."/>
            <person name="Cheng Z."/>
            <person name="Lindblad-Toh K."/>
            <person name="Eichler E.E."/>
            <person name="Ponting C.P."/>
        </authorList>
    </citation>
    <scope>NUCLEOTIDE SEQUENCE [LARGE SCALE GENOMIC DNA]</scope>
    <source>
        <strain>C57BL/6J</strain>
    </source>
</reference>
<reference key="4">
    <citation type="journal article" date="2004" name="Genome Res.">
        <title>The status, quality, and expansion of the NIH full-length cDNA project: the Mammalian Gene Collection (MGC).</title>
        <authorList>
            <consortium name="The MGC Project Team"/>
        </authorList>
    </citation>
    <scope>NUCLEOTIDE SEQUENCE [LARGE SCALE MRNA]</scope>
    <source>
        <strain>FVB/N</strain>
        <tissue>Kidney</tissue>
    </source>
</reference>
<reference key="5">
    <citation type="journal article" date="2002" name="Proc. Natl. Acad. Sci. U.S.A.">
        <title>Identification of a gene encoding MGAT1, a monoacylglycerol acyltransferase.</title>
        <authorList>
            <person name="Yen C.-L.E."/>
            <person name="Stone S.J."/>
            <person name="Cases S."/>
            <person name="Zhou P."/>
            <person name="Farese R.V. Jr."/>
        </authorList>
    </citation>
    <scope>CATALYTIC ACTIVITY</scope>
    <scope>FUNCTION</scope>
    <scope>SUBCELLULAR LOCATION</scope>
    <scope>TISSUE SPECIFICITY</scope>
</reference>
<reference key="6">
    <citation type="journal article" date="2003" name="J. Biol. Chem.">
        <title>MGAT2, a monoacylglycerol acyltransferase expressed in the small intestine.</title>
        <authorList>
            <person name="Yen C.-L.E."/>
            <person name="Farese R.V. Jr."/>
        </authorList>
    </citation>
    <scope>FUNCTION</scope>
    <scope>TISSUE SPECIFICITY</scope>
    <scope>CATALYTIC ACTIVITY</scope>
    <source>
        <tissue>Intestine</tissue>
    </source>
</reference>
<reference key="7">
    <citation type="journal article" date="2005" name="J. Lipid Res.">
        <title>A human skin multifunctional O-acyltransferase that catalyzes the synthesis of acylglycerols, waxes, and retinyl esters.</title>
        <authorList>
            <person name="Yen C.-L.E."/>
            <person name="Brown C.H. IV"/>
            <person name="Monetti M."/>
            <person name="Farese R.V. Jr."/>
        </authorList>
    </citation>
    <scope>CATALYTIC ACTIVITY</scope>
</reference>
<reference key="8">
    <citation type="journal article" date="2010" name="Cell">
        <title>A tissue-specific atlas of mouse protein phosphorylation and expression.</title>
        <authorList>
            <person name="Huttlin E.L."/>
            <person name="Jedrychowski M.P."/>
            <person name="Elias J.E."/>
            <person name="Goswami T."/>
            <person name="Rad R."/>
            <person name="Beausoleil S.A."/>
            <person name="Villen J."/>
            <person name="Haas W."/>
            <person name="Sowa M.E."/>
            <person name="Gygi S.P."/>
        </authorList>
    </citation>
    <scope>IDENTIFICATION BY MASS SPECTROMETRY [LARGE SCALE ANALYSIS]</scope>
    <source>
        <tissue>Kidney</tissue>
    </source>
</reference>
<comment type="function">
    <text evidence="2 3">Involved in glycerolipid synthesis and lipid metabolism (PubMed:12077311, PubMed:12621063). Catalyzes the formation of diacylglycerol, the precursor of triacylglycerol, by transferring the acyl chain of a fatty acyl-CoA to a monoacylglycerol, mainly at the sn-1 or sn-3 positions (PubMed:12077311, PubMed:12621063). It uses both sn-2-monoacylglycerol (2-acylglycerol) and sn-1-monoacylglycerol (1-acyl-sn-glycerol) equally well as substrates, and uses sn-3-monoacylglycerol (3-acyl-sn-glycerol) with lower efficiency (PubMed:12077311). Probably not involved in absorption of dietary fat in the small intestine.</text>
</comment>
<comment type="catalytic activity">
    <reaction evidence="2 3 4">
        <text>a 2-acylglycerol + an acyl-CoA = a 1,2-diacylglycerol + CoA</text>
        <dbReference type="Rhea" id="RHEA:16741"/>
        <dbReference type="ChEBI" id="CHEBI:17389"/>
        <dbReference type="ChEBI" id="CHEBI:49172"/>
        <dbReference type="ChEBI" id="CHEBI:57287"/>
        <dbReference type="ChEBI" id="CHEBI:58342"/>
        <dbReference type="EC" id="2.3.1.22"/>
    </reaction>
    <physiologicalReaction direction="left-to-right" evidence="6 7 8">
        <dbReference type="Rhea" id="RHEA:16742"/>
    </physiologicalReaction>
</comment>
<comment type="catalytic activity">
    <reaction evidence="3">
        <text>2-(9Z-octadecenoyl)-glycerol + butanoyl-CoA = 1-butanoyl-2-(9Z-octadecenoyl)-glycerol + CoA</text>
        <dbReference type="Rhea" id="RHEA:77271"/>
        <dbReference type="ChEBI" id="CHEBI:57287"/>
        <dbReference type="ChEBI" id="CHEBI:57371"/>
        <dbReference type="ChEBI" id="CHEBI:73990"/>
        <dbReference type="ChEBI" id="CHEBI:197386"/>
    </reaction>
    <physiologicalReaction direction="left-to-right" evidence="7">
        <dbReference type="Rhea" id="RHEA:77272"/>
    </physiologicalReaction>
</comment>
<comment type="catalytic activity">
    <reaction evidence="3">
        <text>2-(9Z-octadecenoyl)-glycerol + octanoyl-CoA = 1-octanoyl-2-(9Z-octadecenoyl)-glycerol + CoA</text>
        <dbReference type="Rhea" id="RHEA:77539"/>
        <dbReference type="ChEBI" id="CHEBI:57287"/>
        <dbReference type="ChEBI" id="CHEBI:57386"/>
        <dbReference type="ChEBI" id="CHEBI:73990"/>
        <dbReference type="ChEBI" id="CHEBI:197391"/>
    </reaction>
    <physiologicalReaction direction="left-to-right" evidence="7">
        <dbReference type="Rhea" id="RHEA:77540"/>
    </physiologicalReaction>
</comment>
<comment type="catalytic activity">
    <reaction evidence="3">
        <text>2-(9Z-octadecenoyl)-glycerol + dodecanoyl-CoA = 1-dodecanoyl-2-(9Z-octadecenoyl)-glycerol + CoA</text>
        <dbReference type="Rhea" id="RHEA:77275"/>
        <dbReference type="ChEBI" id="CHEBI:57287"/>
        <dbReference type="ChEBI" id="CHEBI:57375"/>
        <dbReference type="ChEBI" id="CHEBI:73990"/>
        <dbReference type="ChEBI" id="CHEBI:75579"/>
    </reaction>
    <physiologicalReaction direction="left-to-right" evidence="7">
        <dbReference type="Rhea" id="RHEA:77276"/>
    </physiologicalReaction>
</comment>
<comment type="catalytic activity">
    <reaction evidence="3">
        <text>2-(9Z-octadecenoyl)-glycerol + tetradecanoyl-CoA = 1-tetradecanoyl-2-(9Z-octadecenoyl)-glycerol + CoA</text>
        <dbReference type="Rhea" id="RHEA:77279"/>
        <dbReference type="ChEBI" id="CHEBI:57287"/>
        <dbReference type="ChEBI" id="CHEBI:57385"/>
        <dbReference type="ChEBI" id="CHEBI:73990"/>
        <dbReference type="ChEBI" id="CHEBI:75582"/>
    </reaction>
    <physiologicalReaction direction="left-to-right" evidence="7">
        <dbReference type="Rhea" id="RHEA:77280"/>
    </physiologicalReaction>
</comment>
<comment type="catalytic activity">
    <reaction evidence="3 4">
        <text>2-(9Z-octadecenoyl)-glycerol + hexadecanoyl-CoA = 1-hexadecanoyl-2-(9Z-octadecenoyl)-glycerol + CoA</text>
        <dbReference type="Rhea" id="RHEA:77283"/>
        <dbReference type="ChEBI" id="CHEBI:57287"/>
        <dbReference type="ChEBI" id="CHEBI:57379"/>
        <dbReference type="ChEBI" id="CHEBI:73990"/>
        <dbReference type="ChEBI" id="CHEBI:75585"/>
    </reaction>
    <physiologicalReaction direction="left-to-right" evidence="7 8">
        <dbReference type="Rhea" id="RHEA:77284"/>
    </physiologicalReaction>
</comment>
<comment type="catalytic activity">
    <reaction evidence="3">
        <text>2-(9Z-octadecenoyl)-glycerol + octadecanoyl-CoA = 1-octadecanoyl-2-(9Z-octadecenoyl)-glycerol + CoA</text>
        <dbReference type="Rhea" id="RHEA:77287"/>
        <dbReference type="ChEBI" id="CHEBI:57287"/>
        <dbReference type="ChEBI" id="CHEBI:57394"/>
        <dbReference type="ChEBI" id="CHEBI:73990"/>
        <dbReference type="ChEBI" id="CHEBI:75590"/>
    </reaction>
    <physiologicalReaction direction="left-to-right" evidence="7">
        <dbReference type="Rhea" id="RHEA:77288"/>
    </physiologicalReaction>
</comment>
<comment type="catalytic activity">
    <reaction evidence="3">
        <text>eicosanoyl-CoA + 2-(9Z-octadecenoyl)-glycerol = 1-eicosanoyl-2-(9Z-octadecenoyl)-glycerol + CoA</text>
        <dbReference type="Rhea" id="RHEA:77543"/>
        <dbReference type="ChEBI" id="CHEBI:57287"/>
        <dbReference type="ChEBI" id="CHEBI:57380"/>
        <dbReference type="ChEBI" id="CHEBI:73990"/>
        <dbReference type="ChEBI" id="CHEBI:197392"/>
    </reaction>
    <physiologicalReaction direction="left-to-right" evidence="7">
        <dbReference type="Rhea" id="RHEA:77544"/>
    </physiologicalReaction>
</comment>
<comment type="catalytic activity">
    <reaction evidence="3">
        <text>2-(9Z-octadecenoyl)-glycerol + (9Z)-octadecenoyl-CoA = 1,2-di-(9Z-octadecenoyl)-glycerol + CoA</text>
        <dbReference type="Rhea" id="RHEA:39951"/>
        <dbReference type="ChEBI" id="CHEBI:52323"/>
        <dbReference type="ChEBI" id="CHEBI:57287"/>
        <dbReference type="ChEBI" id="CHEBI:57387"/>
        <dbReference type="ChEBI" id="CHEBI:73990"/>
    </reaction>
    <physiologicalReaction direction="left-to-right" evidence="7">
        <dbReference type="Rhea" id="RHEA:39952"/>
    </physiologicalReaction>
</comment>
<comment type="catalytic activity">
    <reaction evidence="3">
        <text>2-(9Z-octadecenoyl)-glycerol + (9Z,12Z)-octadecadienoyl-CoA = 1-(9Z,12Z-octadecadienoyl)-2-(9Z-octadecenoyl)-glycerol + CoA</text>
        <dbReference type="Rhea" id="RHEA:77291"/>
        <dbReference type="ChEBI" id="CHEBI:57287"/>
        <dbReference type="ChEBI" id="CHEBI:57383"/>
        <dbReference type="ChEBI" id="CHEBI:73990"/>
        <dbReference type="ChEBI" id="CHEBI:75614"/>
    </reaction>
    <physiologicalReaction direction="left-to-right" evidence="7">
        <dbReference type="Rhea" id="RHEA:77292"/>
    </physiologicalReaction>
</comment>
<comment type="catalytic activity">
    <reaction evidence="3">
        <text>2-(9Z-octadecenoyl)-glycerol + (5Z,8Z,11Z,14Z)-eicosatetraenoyl-CoA = 1-(5Z,8Z,11Z,14Z-eicosatetraenoyl)-2-(9Z-octadecenoyl)-glycerol + CoA</text>
        <dbReference type="Rhea" id="RHEA:77547"/>
        <dbReference type="ChEBI" id="CHEBI:57287"/>
        <dbReference type="ChEBI" id="CHEBI:57368"/>
        <dbReference type="ChEBI" id="CHEBI:73990"/>
        <dbReference type="ChEBI" id="CHEBI:75611"/>
    </reaction>
    <physiologicalReaction direction="left-to-right" evidence="7">
        <dbReference type="Rhea" id="RHEA:77548"/>
    </physiologicalReaction>
</comment>
<comment type="catalytic activity">
    <reaction evidence="6 7">
        <text>a 2-acylglycerol + an acyl-CoA = a 1,2-diacyl-sn-glycerol + CoA</text>
        <dbReference type="Rhea" id="RHEA:32947"/>
        <dbReference type="ChEBI" id="CHEBI:17389"/>
        <dbReference type="ChEBI" id="CHEBI:17815"/>
        <dbReference type="ChEBI" id="CHEBI:57287"/>
        <dbReference type="ChEBI" id="CHEBI:58342"/>
    </reaction>
    <physiologicalReaction direction="left-to-right" evidence="6 7">
        <dbReference type="Rhea" id="RHEA:32948"/>
    </physiologicalReaction>
</comment>
<comment type="catalytic activity">
    <reaction evidence="6 7">
        <text>a 2-acylglycerol + an acyl-CoA = a 2,3-diacyl-sn-glycerol + CoA</text>
        <dbReference type="Rhea" id="RHEA:38467"/>
        <dbReference type="ChEBI" id="CHEBI:17389"/>
        <dbReference type="ChEBI" id="CHEBI:57287"/>
        <dbReference type="ChEBI" id="CHEBI:58342"/>
        <dbReference type="ChEBI" id="CHEBI:75524"/>
    </reaction>
    <physiologicalReaction direction="left-to-right" evidence="6 7">
        <dbReference type="Rhea" id="RHEA:38468"/>
    </physiologicalReaction>
</comment>
<comment type="catalytic activity">
    <reaction evidence="2 3">
        <text>a 1-acylglycerol + an acyl-CoA = a 1,2-diacylglycerol + CoA</text>
        <dbReference type="Rhea" id="RHEA:39943"/>
        <dbReference type="ChEBI" id="CHEBI:35759"/>
        <dbReference type="ChEBI" id="CHEBI:49172"/>
        <dbReference type="ChEBI" id="CHEBI:57287"/>
        <dbReference type="ChEBI" id="CHEBI:58342"/>
    </reaction>
    <physiologicalReaction direction="left-to-right" evidence="6 7">
        <dbReference type="Rhea" id="RHEA:39944"/>
    </physiologicalReaction>
</comment>
<comment type="catalytic activity">
    <reaction evidence="7">
        <text>1-dodecanoylglycerol + (9Z)-octadecenoyl-CoA = 1-dodecanoyl-2-(9Z-octadecenoyl)-glycerol + CoA</text>
        <dbReference type="Rhea" id="RHEA:38115"/>
        <dbReference type="ChEBI" id="CHEBI:57287"/>
        <dbReference type="ChEBI" id="CHEBI:57387"/>
        <dbReference type="ChEBI" id="CHEBI:75539"/>
        <dbReference type="ChEBI" id="CHEBI:75579"/>
    </reaction>
    <physiologicalReaction direction="left-to-right" evidence="7">
        <dbReference type="Rhea" id="RHEA:38116"/>
    </physiologicalReaction>
</comment>
<comment type="catalytic activity">
    <reaction evidence="7">
        <text>1-tetradecanoylglycerol + (9Z)-octadecenoyl-CoA = 1-tetradecanoyl-2-(9Z-octadecenoyl)-glycerol + CoA</text>
        <dbReference type="Rhea" id="RHEA:38119"/>
        <dbReference type="ChEBI" id="CHEBI:57287"/>
        <dbReference type="ChEBI" id="CHEBI:57387"/>
        <dbReference type="ChEBI" id="CHEBI:75562"/>
        <dbReference type="ChEBI" id="CHEBI:75582"/>
    </reaction>
    <physiologicalReaction direction="left-to-right" evidence="7">
        <dbReference type="Rhea" id="RHEA:38120"/>
    </physiologicalReaction>
</comment>
<comment type="catalytic activity">
    <reaction evidence="7">
        <text>1-hexadecanoylglycerol + (9Z)-octadecenoyl-CoA = 1-hexadecanoyl-2-(9Z-octadecenoyl)-glycerol + CoA</text>
        <dbReference type="Rhea" id="RHEA:38123"/>
        <dbReference type="ChEBI" id="CHEBI:57287"/>
        <dbReference type="ChEBI" id="CHEBI:57387"/>
        <dbReference type="ChEBI" id="CHEBI:69081"/>
        <dbReference type="ChEBI" id="CHEBI:75585"/>
    </reaction>
    <physiologicalReaction direction="left-to-right" evidence="7">
        <dbReference type="Rhea" id="RHEA:38124"/>
    </physiologicalReaction>
</comment>
<comment type="catalytic activity">
    <reaction evidence="7">
        <text>1-(9Z-octadecenoyl)-glycerol + (9Z)-octadecenoyl-CoA = 1,2-di-(9Z-octadecenoyl)-glycerol + CoA</text>
        <dbReference type="Rhea" id="RHEA:37915"/>
        <dbReference type="ChEBI" id="CHEBI:52323"/>
        <dbReference type="ChEBI" id="CHEBI:57287"/>
        <dbReference type="ChEBI" id="CHEBI:57387"/>
        <dbReference type="ChEBI" id="CHEBI:75342"/>
    </reaction>
    <physiologicalReaction direction="left-to-right" evidence="7">
        <dbReference type="Rhea" id="RHEA:37916"/>
    </physiologicalReaction>
</comment>
<comment type="catalytic activity">
    <reaction evidence="7">
        <text>1-(9Z,12Z-octadecadienoyl)-glycerol + (9Z)-octadecenoyl-CoA = 1-(9Z,12Z-octadecadienoyl)-2-(9Z-octadecenoyl)-glycerol + CoA</text>
        <dbReference type="Rhea" id="RHEA:38131"/>
        <dbReference type="ChEBI" id="CHEBI:57287"/>
        <dbReference type="ChEBI" id="CHEBI:57387"/>
        <dbReference type="ChEBI" id="CHEBI:75568"/>
        <dbReference type="ChEBI" id="CHEBI:75614"/>
    </reaction>
    <physiologicalReaction direction="left-to-right" evidence="7">
        <dbReference type="Rhea" id="RHEA:38132"/>
    </physiologicalReaction>
</comment>
<comment type="catalytic activity">
    <reaction evidence="7">
        <text>1-(9Z,12Z,15Z-octadecatrienoyl)-glycerol + (9Z)-octadecenoyl-CoA = 1-(9Z,12Z,15Z-octadecatrienoyl)-2-(9Z-octadecenoyl)-glycerol + CoA</text>
        <dbReference type="Rhea" id="RHEA:38135"/>
        <dbReference type="ChEBI" id="CHEBI:57287"/>
        <dbReference type="ChEBI" id="CHEBI:57387"/>
        <dbReference type="ChEBI" id="CHEBI:75609"/>
        <dbReference type="ChEBI" id="CHEBI:75610"/>
    </reaction>
    <physiologicalReaction direction="left-to-right" evidence="7">
        <dbReference type="Rhea" id="RHEA:38136"/>
    </physiologicalReaction>
</comment>
<comment type="catalytic activity">
    <reaction evidence="7">
        <text>1-(5Z,8Z,11Z,14Z-eicosatetraenoyl)-glycerol + (9Z)-octadecenoyl-CoA = 1-(5Z,8Z,11Z,14Z-eicosatetraenoyl)-2-(9Z-octadecenoyl)-glycerol + CoA</text>
        <dbReference type="Rhea" id="RHEA:38139"/>
        <dbReference type="ChEBI" id="CHEBI:57287"/>
        <dbReference type="ChEBI" id="CHEBI:57387"/>
        <dbReference type="ChEBI" id="CHEBI:75611"/>
        <dbReference type="ChEBI" id="CHEBI:75612"/>
    </reaction>
    <physiologicalReaction direction="left-to-right" evidence="7">
        <dbReference type="Rhea" id="RHEA:38140"/>
    </physiologicalReaction>
</comment>
<comment type="catalytic activity">
    <reaction evidence="2 3">
        <text>a 1-acylglycerol + an acyl-CoA = a 1,3-diacylglycerol + CoA</text>
        <dbReference type="Rhea" id="RHEA:77571"/>
        <dbReference type="ChEBI" id="CHEBI:35759"/>
        <dbReference type="ChEBI" id="CHEBI:47777"/>
        <dbReference type="ChEBI" id="CHEBI:57287"/>
        <dbReference type="ChEBI" id="CHEBI:58342"/>
    </reaction>
    <physiologicalReaction direction="left-to-right" evidence="6 7">
        <dbReference type="Rhea" id="RHEA:77572"/>
    </physiologicalReaction>
</comment>
<comment type="catalytic activity">
    <reaction evidence="7">
        <text>1-dodecanoylglycerol + (9Z)-octadecenoyl-CoA = 1-dodecanoyl-3-(9Z-octadecenoyl)-glycerol + CoA</text>
        <dbReference type="Rhea" id="RHEA:77587"/>
        <dbReference type="ChEBI" id="CHEBI:57287"/>
        <dbReference type="ChEBI" id="CHEBI:57387"/>
        <dbReference type="ChEBI" id="CHEBI:75539"/>
        <dbReference type="ChEBI" id="CHEBI:197406"/>
    </reaction>
    <physiologicalReaction direction="left-to-right" evidence="7">
        <dbReference type="Rhea" id="RHEA:77588"/>
    </physiologicalReaction>
</comment>
<comment type="catalytic activity">
    <reaction evidence="7">
        <text>1-hexadecanoylglycerol + (9Z)-octadecenoyl-CoA = 1-(9Z-octadecenoyl)-3-hexadecanoylglycerol + CoA</text>
        <dbReference type="Rhea" id="RHEA:77563"/>
        <dbReference type="ChEBI" id="CHEBI:57287"/>
        <dbReference type="ChEBI" id="CHEBI:57387"/>
        <dbReference type="ChEBI" id="CHEBI:69081"/>
        <dbReference type="ChEBI" id="CHEBI:75869"/>
    </reaction>
    <physiologicalReaction direction="left-to-right" evidence="7">
        <dbReference type="Rhea" id="RHEA:77564"/>
    </physiologicalReaction>
</comment>
<comment type="catalytic activity">
    <reaction evidence="7">
        <text>1-octadecanoylglycerol + (9Z)-octadecenoyl-CoA = 1-octadecanoyl-3-(9Z-octadecenoyl)-glycerol + CoA</text>
        <dbReference type="Rhea" id="RHEA:77583"/>
        <dbReference type="ChEBI" id="CHEBI:57287"/>
        <dbReference type="ChEBI" id="CHEBI:57387"/>
        <dbReference type="ChEBI" id="CHEBI:75555"/>
        <dbReference type="ChEBI" id="CHEBI:197407"/>
    </reaction>
    <physiologicalReaction direction="left-to-right" evidence="7">
        <dbReference type="Rhea" id="RHEA:77584"/>
    </physiologicalReaction>
</comment>
<comment type="catalytic activity">
    <reaction evidence="2">
        <text>1-(9Z-octadecenoyl)-sn-glycerol + (9Z)-octadecenoyl-CoA = 1,3-di-(9Z-octadecenoyl)-glycerol + CoA</text>
        <dbReference type="Rhea" id="RHEA:77267"/>
        <dbReference type="ChEBI" id="CHEBI:57287"/>
        <dbReference type="ChEBI" id="CHEBI:57387"/>
        <dbReference type="ChEBI" id="CHEBI:75735"/>
        <dbReference type="ChEBI" id="CHEBI:75757"/>
    </reaction>
    <physiologicalReaction direction="left-to-right" evidence="6">
        <dbReference type="Rhea" id="RHEA:77268"/>
    </physiologicalReaction>
</comment>
<comment type="catalytic activity">
    <reaction evidence="7">
        <text>1-(9Z,12Z-octadecadienoyl)-glycerol + (9Z)-octadecenoyl-CoA = 1-(9Z-octadecenoyl)-3-(9Z,12Z-octadecadienoyl)-glycerol + CoA</text>
        <dbReference type="Rhea" id="RHEA:77591"/>
        <dbReference type="ChEBI" id="CHEBI:57287"/>
        <dbReference type="ChEBI" id="CHEBI:57387"/>
        <dbReference type="ChEBI" id="CHEBI:75568"/>
        <dbReference type="ChEBI" id="CHEBI:133484"/>
    </reaction>
    <physiologicalReaction direction="left-to-right" evidence="7">
        <dbReference type="Rhea" id="RHEA:77592"/>
    </physiologicalReaction>
</comment>
<comment type="catalytic activity">
    <reaction evidence="7">
        <text>1-(9Z,12Z,15Z-octadecatrienoyl)-glycerol + (9Z)-octadecenoyl-CoA = 1-(9Z,12Z,15Z-octadecatrienoyl)-3-(9Z-octadecenoyl)-glycerol + CoA</text>
        <dbReference type="Rhea" id="RHEA:77595"/>
        <dbReference type="ChEBI" id="CHEBI:57287"/>
        <dbReference type="ChEBI" id="CHEBI:57387"/>
        <dbReference type="ChEBI" id="CHEBI:75610"/>
        <dbReference type="ChEBI" id="CHEBI:197408"/>
    </reaction>
    <physiologicalReaction direction="left-to-right" evidence="7">
        <dbReference type="Rhea" id="RHEA:77596"/>
    </physiologicalReaction>
</comment>
<comment type="catalytic activity">
    <reaction evidence="2">
        <text>a 1-acyl-sn-glycerol + an acyl-CoA = a 1,3-diacyl-sn-glycerol + CoA</text>
        <dbReference type="Rhea" id="RHEA:77559"/>
        <dbReference type="ChEBI" id="CHEBI:57287"/>
        <dbReference type="ChEBI" id="CHEBI:58342"/>
        <dbReference type="ChEBI" id="CHEBI:64683"/>
        <dbReference type="ChEBI" id="CHEBI:77272"/>
    </reaction>
    <physiologicalReaction direction="left-to-right" evidence="6">
        <dbReference type="Rhea" id="RHEA:77560"/>
    </physiologicalReaction>
</comment>
<comment type="catalytic activity">
    <reaction evidence="2">
        <text>a 3-acyl-sn-glycerol + an acyl-CoA = a 1,3-diacyl-sn-glycerol + CoA</text>
        <dbReference type="Rhea" id="RHEA:77555"/>
        <dbReference type="ChEBI" id="CHEBI:57287"/>
        <dbReference type="ChEBI" id="CHEBI:58342"/>
        <dbReference type="ChEBI" id="CHEBI:64760"/>
        <dbReference type="ChEBI" id="CHEBI:77272"/>
    </reaction>
    <physiologicalReaction direction="left-to-right" evidence="6">
        <dbReference type="Rhea" id="RHEA:77556"/>
    </physiologicalReaction>
</comment>
<comment type="catalytic activity">
    <reaction evidence="2">
        <text>3-octadecanoyl-sn-glycerol + (9Z)-octadecenoyl-CoA = 1-(9Z-octadecenoyl)-3-octadecanoyl-sn-glycerol + CoA</text>
        <dbReference type="Rhea" id="RHEA:77551"/>
        <dbReference type="ChEBI" id="CHEBI:57287"/>
        <dbReference type="ChEBI" id="CHEBI:57387"/>
        <dbReference type="ChEBI" id="CHEBI:75553"/>
        <dbReference type="ChEBI" id="CHEBI:197404"/>
    </reaction>
    <physiologicalReaction direction="left-to-right" evidence="6">
        <dbReference type="Rhea" id="RHEA:77552"/>
    </physiologicalReaction>
</comment>
<comment type="pathway">
    <text evidence="6 7">Glycerolipid metabolism; triacylglycerol biosynthesis.</text>
</comment>
<comment type="subcellular location">
    <subcellularLocation>
        <location evidence="6">Endoplasmic reticulum membrane</location>
        <topology evidence="6">Multi-pass membrane protein</topology>
    </subcellularLocation>
</comment>
<comment type="tissue specificity">
    <text evidence="2">Expressed at high level in kidney and stomach. Expressed at lower level in brown and white adipose tissue, uterus and liver. Not detected in small intestine.</text>
</comment>
<comment type="similarity">
    <text evidence="5">Belongs to the diacylglycerol acyltransferase family.</text>
</comment>